<evidence type="ECO:0000250" key="1">
    <source>
        <dbReference type="UniProtKB" id="P48237"/>
    </source>
</evidence>
<evidence type="ECO:0000255" key="2"/>
<evidence type="ECO:0000255" key="3">
    <source>
        <dbReference type="PROSITE-ProRule" id="PRU00708"/>
    </source>
</evidence>
<evidence type="ECO:0000256" key="4">
    <source>
        <dbReference type="SAM" id="MobiDB-lite"/>
    </source>
</evidence>
<evidence type="ECO:0000305" key="5"/>
<reference key="1">
    <citation type="journal article" date="2007" name="Nat. Biotechnol.">
        <title>Genome sequence of the lignocellulose-bioconverting and xylose-fermenting yeast Pichia stipitis.</title>
        <authorList>
            <person name="Jeffries T.W."/>
            <person name="Grigoriev I.V."/>
            <person name="Grimwood J."/>
            <person name="Laplaza J.M."/>
            <person name="Aerts A."/>
            <person name="Salamov A."/>
            <person name="Schmutz J."/>
            <person name="Lindquist E."/>
            <person name="Dehal P."/>
            <person name="Shapiro H."/>
            <person name="Jin Y.-S."/>
            <person name="Passoth V."/>
            <person name="Richardson P.M."/>
        </authorList>
    </citation>
    <scope>NUCLEOTIDE SEQUENCE [LARGE SCALE GENOMIC DNA]</scope>
    <source>
        <strain>ATCC 58785 / CBS 6054 / NBRC 10063 / NRRL Y-11545</strain>
    </source>
</reference>
<gene>
    <name type="primary">CCM1</name>
    <name type="ORF">PICST_30689</name>
</gene>
<comment type="function">
    <text evidence="1">Regulates mitochondrial small subunit maturation by controlling 15S rRNA 5'-end processing. Localizes to the 5' precursor of the 15S rRNA in a position that is subsequently occupied by mS47 in the mature yeast mtSSU. Uses structure and sequence-specific RNA recognition, binding to a single-stranded region of the precursor and specifically recognizing bases -6 to -1. The exchange of Ccm1 for mS47 is coupled to the irreversible removal of precursor rRNA that is accompanied by conformational changes of the mitoribosomal proteins uS5m and mS26. These conformational changes signal completion of 5'-end rRNA processing through protection of the mature 5'-end of the 15S rRNA and stabilization of mS47. The removal of the 5' precursor together with the dissociation of Ccm1 may be catalyzed by the 5'-3' exoribonuclease Pet127. Involved in the specific removal of group I introns in mitochondrial encoded transcripts.</text>
</comment>
<comment type="subunit">
    <text evidence="1">Binds to mitochondrial small subunit 15S rRNA.</text>
</comment>
<comment type="subcellular location">
    <subcellularLocation>
        <location evidence="1">Mitochondrion</location>
    </subcellularLocation>
</comment>
<comment type="miscellaneous">
    <text evidence="1">Involved in mitochondrial-nuclear incompatibility, a major determinant in reproductive isolation between species, through hybrid incompatibility of Ccm1 and its interacting partner 15S rRNA between yeast species.</text>
</comment>
<comment type="similarity">
    <text evidence="5">Belongs to the CCM1 family.</text>
</comment>
<dbReference type="EMBL" id="CP000497">
    <property type="protein sequence ID" value="ABN65737.2"/>
    <property type="molecule type" value="Genomic_DNA"/>
</dbReference>
<dbReference type="RefSeq" id="XP_001383766.2">
    <property type="nucleotide sequence ID" value="XM_001383729.1"/>
</dbReference>
<dbReference type="SMR" id="A3LRH4"/>
<dbReference type="FunCoup" id="A3LRH4">
    <property type="interactions" value="109"/>
</dbReference>
<dbReference type="STRING" id="322104.A3LRH4"/>
<dbReference type="GeneID" id="4838273"/>
<dbReference type="KEGG" id="pic:PICST_30689"/>
<dbReference type="eggNOG" id="ENOG502QUX2">
    <property type="taxonomic scope" value="Eukaryota"/>
</dbReference>
<dbReference type="HOGENOM" id="CLU_019745_0_0_1"/>
<dbReference type="InParanoid" id="A3LRH4"/>
<dbReference type="OMA" id="ESSAIWA"/>
<dbReference type="OrthoDB" id="185373at2759"/>
<dbReference type="Proteomes" id="UP000002258">
    <property type="component" value="Chromosome 3"/>
</dbReference>
<dbReference type="GO" id="GO:0005739">
    <property type="term" value="C:mitochondrion"/>
    <property type="evidence" value="ECO:0007669"/>
    <property type="project" value="UniProtKB-SubCell"/>
</dbReference>
<dbReference type="GO" id="GO:0006397">
    <property type="term" value="P:mRNA processing"/>
    <property type="evidence" value="ECO:0007669"/>
    <property type="project" value="UniProtKB-KW"/>
</dbReference>
<dbReference type="GO" id="GO:0008380">
    <property type="term" value="P:RNA splicing"/>
    <property type="evidence" value="ECO:0007669"/>
    <property type="project" value="UniProtKB-KW"/>
</dbReference>
<dbReference type="Gene3D" id="1.25.40.10">
    <property type="entry name" value="Tetratricopeptide repeat domain"/>
    <property type="match status" value="1"/>
</dbReference>
<dbReference type="InterPro" id="IPR002885">
    <property type="entry name" value="Pentatricopeptide_rpt"/>
</dbReference>
<dbReference type="InterPro" id="IPR033443">
    <property type="entry name" value="PROP1-like_PPR_dom"/>
</dbReference>
<dbReference type="InterPro" id="IPR011990">
    <property type="entry name" value="TPR-like_helical_dom_sf"/>
</dbReference>
<dbReference type="NCBIfam" id="TIGR00756">
    <property type="entry name" value="PPR"/>
    <property type="match status" value="1"/>
</dbReference>
<dbReference type="PANTHER" id="PTHR47447">
    <property type="entry name" value="OS03G0856100 PROTEIN"/>
    <property type="match status" value="1"/>
</dbReference>
<dbReference type="PANTHER" id="PTHR47447:SF23">
    <property type="entry name" value="PENTACOTRIPEPTIDE-REPEAT REGION OF PRORP DOMAIN-CONTAINING PROTEIN"/>
    <property type="match status" value="1"/>
</dbReference>
<dbReference type="Pfam" id="PF17177">
    <property type="entry name" value="PPR_long"/>
    <property type="match status" value="1"/>
</dbReference>
<dbReference type="PROSITE" id="PS51375">
    <property type="entry name" value="PPR"/>
    <property type="match status" value="5"/>
</dbReference>
<name>CCM1_PICST</name>
<protein>
    <recommendedName>
        <fullName>Mitochondrial 15S rRNA processing factor CCM1</fullName>
    </recommendedName>
</protein>
<sequence>MLRYARTVRFSQVGNSVRTSSGSFGPIRTIFISSHDRKSPSHSLSPISNLPNHNDSSTERARKTLDDDFQRKIKYDELKTRKRIEDLRALTKKVSQLVKQKQELSKIAKIPVPSDEIKKLKSVEDVVKVTKSQHVATVRTNIPEPETVTTHIEKEESEFVMEQNAFIVPATPIPEEIAKRLGLALRYLVSETNQNWTLVLDQLKADRGFKDLPYTTVVDFLTKIPASELQKVIPKVDQLLKEAKIPKTAKILNLYIASLASGSAVPNQVIQILENYCKRIRKLKKGKLPKRTCEVMVQAYGKNGNINRIQDLLSEMKLHKIEISGMALTNILATCVYKARDHKQAVEIFDTMRFQKEVYKPGTRAYQDIIVSYVNNDDIEKAIDIYREMITEKIEPNQQIMVALARGCASREAFKFKSWDFIFEINRNNWTPTLPTYEYMLYLSSRDGDLALTRALYSRLLKDNTVSLRSFNFLLLAYSKARLSDDLGEPFLINADEKGRKFRFNVIDRSGISDPTNQFPFLPFNELTTKEQIMAESSAIWAHACLNNSELINSESTTSYLNIASERGTLSDFIDRMEGSTFLDEKINNVLSGVVIEEPDVVVETTDFLTQKSSAHEKYDETSIVKSPILKSIQSKRTPRVSLTYVVALKAAGKFNNYNFANRIWQERGKFRKTETFKKLPRTEKDKLDFQFATQMVRTLTELNLLEDALAVLKSTEYQFRWTWKELDVLKSAAIRQGNTNVAQTVRSIARRAQLTYEGKIRRKDYKRYVMQRGY</sequence>
<accession>A3LRH4</accession>
<proteinExistence type="inferred from homology"/>
<keyword id="KW-0496">Mitochondrion</keyword>
<keyword id="KW-0507">mRNA processing</keyword>
<keyword id="KW-0508">mRNA splicing</keyword>
<keyword id="KW-1185">Reference proteome</keyword>
<keyword id="KW-0677">Repeat</keyword>
<keyword id="KW-0809">Transit peptide</keyword>
<feature type="transit peptide" description="Mitochondrion" evidence="2">
    <location>
        <begin position="1"/>
        <end position="18"/>
    </location>
</feature>
<feature type="chain" id="PRO_0000402267" description="Mitochondrial 15S rRNA processing factor CCM1" evidence="2">
    <location>
        <begin position="19"/>
        <end position="775"/>
    </location>
</feature>
<feature type="repeat" description="PPR 1" evidence="3">
    <location>
        <begin position="289"/>
        <end position="323"/>
    </location>
</feature>
<feature type="repeat" description="PPR 2" evidence="3">
    <location>
        <begin position="324"/>
        <end position="355"/>
    </location>
</feature>
<feature type="repeat" description="PPR 3" evidence="3">
    <location>
        <begin position="362"/>
        <end position="396"/>
    </location>
</feature>
<feature type="repeat" description="PPR 4" evidence="3">
    <location>
        <begin position="397"/>
        <end position="432"/>
    </location>
</feature>
<feature type="repeat" description="PPR 5" evidence="3">
    <location>
        <begin position="433"/>
        <end position="467"/>
    </location>
</feature>
<feature type="region of interest" description="Disordered" evidence="4">
    <location>
        <begin position="35"/>
        <end position="65"/>
    </location>
</feature>
<feature type="compositionally biased region" description="Polar residues" evidence="4">
    <location>
        <begin position="41"/>
        <end position="55"/>
    </location>
</feature>
<feature type="compositionally biased region" description="Basic and acidic residues" evidence="4">
    <location>
        <begin position="56"/>
        <end position="65"/>
    </location>
</feature>
<organism>
    <name type="scientific">Scheffersomyces stipitis (strain ATCC 58785 / CBS 6054 / NBRC 10063 / NRRL Y-11545)</name>
    <name type="common">Yeast</name>
    <name type="synonym">Pichia stipitis</name>
    <dbReference type="NCBI Taxonomy" id="322104"/>
    <lineage>
        <taxon>Eukaryota</taxon>
        <taxon>Fungi</taxon>
        <taxon>Dikarya</taxon>
        <taxon>Ascomycota</taxon>
        <taxon>Saccharomycotina</taxon>
        <taxon>Pichiomycetes</taxon>
        <taxon>Debaryomycetaceae</taxon>
        <taxon>Scheffersomyces</taxon>
    </lineage>
</organism>